<reference key="1">
    <citation type="submission" date="2004-06" db="EMBL/GenBank/DDBJ databases">
        <authorList>
            <consortium name="NIH - Zebrafish Gene Collection (ZGC) project"/>
        </authorList>
    </citation>
    <scope>NUCLEOTIDE SEQUENCE [LARGE SCALE MRNA]</scope>
    <source>
        <tissue>Embryo</tissue>
    </source>
</reference>
<sequence>MPVCVMMAELDEKLLLQFETQELEAPGGIATPQVYSQLLVLYLLHNDMNNARYLWKRIPQAIKTANPEMAAIWAVGQRIWQRDFPGIYSAIAAYQWSESILPVMEALRESTRRRAYGLVAQAYTSISAEDFAAFVGYSVEEAVKGVVSHGWQADPNTRMIMPQKPDPPPVSLVPNEQQLARLTDYVAFLEN</sequence>
<organism>
    <name type="scientific">Danio rerio</name>
    <name type="common">Zebrafish</name>
    <name type="synonym">Brachydanio rerio</name>
    <dbReference type="NCBI Taxonomy" id="7955"/>
    <lineage>
        <taxon>Eukaryota</taxon>
        <taxon>Metazoa</taxon>
        <taxon>Chordata</taxon>
        <taxon>Craniata</taxon>
        <taxon>Vertebrata</taxon>
        <taxon>Euteleostomi</taxon>
        <taxon>Actinopterygii</taxon>
        <taxon>Neopterygii</taxon>
        <taxon>Teleostei</taxon>
        <taxon>Ostariophysi</taxon>
        <taxon>Cypriniformes</taxon>
        <taxon>Danionidae</taxon>
        <taxon>Danioninae</taxon>
        <taxon>Danio</taxon>
    </lineage>
</organism>
<evidence type="ECO:0000250" key="1"/>
<evidence type="ECO:0000250" key="2">
    <source>
        <dbReference type="UniProtKB" id="Q99627"/>
    </source>
</evidence>
<evidence type="ECO:0000255" key="3">
    <source>
        <dbReference type="PROSITE-ProRule" id="PRU01185"/>
    </source>
</evidence>
<evidence type="ECO:0000305" key="4"/>
<proteinExistence type="evidence at transcript level"/>
<feature type="chain" id="PRO_0000121011" description="COP9 signalosome complex subunit 8">
    <location>
        <begin position="1"/>
        <end position="191"/>
    </location>
</feature>
<feature type="domain" description="PCI" evidence="3">
    <location>
        <begin position="6"/>
        <end position="179"/>
    </location>
</feature>
<gene>
    <name type="primary">cops8</name>
    <name type="ORF">zgc:56319</name>
</gene>
<dbReference type="EMBL" id="BC046071">
    <property type="protein sequence ID" value="AAH46071.1"/>
    <property type="molecule type" value="mRNA"/>
</dbReference>
<dbReference type="EMBL" id="BC071487">
    <property type="protein sequence ID" value="AAH71487.1"/>
    <property type="molecule type" value="mRNA"/>
</dbReference>
<dbReference type="RefSeq" id="NP_956523.1">
    <property type="nucleotide sequence ID" value="NM_200229.2"/>
</dbReference>
<dbReference type="SMR" id="Q7ZUZ0"/>
<dbReference type="FunCoup" id="Q7ZUZ0">
    <property type="interactions" value="1735"/>
</dbReference>
<dbReference type="STRING" id="7955.ENSDARP00000037304"/>
<dbReference type="PaxDb" id="7955-ENSDARP00000037304"/>
<dbReference type="Ensembl" id="ENSDART00000034686">
    <property type="protein sequence ID" value="ENSDARP00000037304"/>
    <property type="gene ID" value="ENSDARG00000024846"/>
</dbReference>
<dbReference type="Ensembl" id="ENSDART00000184506">
    <property type="protein sequence ID" value="ENSDARP00000151178"/>
    <property type="gene ID" value="ENSDARG00000115974"/>
</dbReference>
<dbReference type="GeneID" id="393198"/>
<dbReference type="KEGG" id="dre:393198"/>
<dbReference type="AGR" id="ZFIN:ZDB-GENE-040426-982"/>
<dbReference type="CTD" id="10920"/>
<dbReference type="ZFIN" id="ZDB-GENE-040426-982">
    <property type="gene designation" value="cops8"/>
</dbReference>
<dbReference type="eggNOG" id="KOG4414">
    <property type="taxonomic scope" value="Eukaryota"/>
</dbReference>
<dbReference type="HOGENOM" id="CLU_098091_1_1_1"/>
<dbReference type="InParanoid" id="Q7ZUZ0"/>
<dbReference type="OMA" id="MRIPDKL"/>
<dbReference type="OrthoDB" id="5351233at2759"/>
<dbReference type="PhylomeDB" id="Q7ZUZ0"/>
<dbReference type="TreeFam" id="TF101150"/>
<dbReference type="Reactome" id="R-DRE-8856825">
    <property type="pathway name" value="Cargo recognition for clathrin-mediated endocytosis"/>
</dbReference>
<dbReference type="Reactome" id="R-DRE-8951664">
    <property type="pathway name" value="Neddylation"/>
</dbReference>
<dbReference type="PRO" id="PR:Q7ZUZ0"/>
<dbReference type="Proteomes" id="UP000000437">
    <property type="component" value="Alternate scaffold 9"/>
</dbReference>
<dbReference type="Proteomes" id="UP000000437">
    <property type="component" value="Chromosome 9"/>
</dbReference>
<dbReference type="Bgee" id="ENSDARG00000024846">
    <property type="expression patterns" value="Expressed in testis and 31 other cell types or tissues"/>
</dbReference>
<dbReference type="GO" id="GO:0008180">
    <property type="term" value="C:COP9 signalosome"/>
    <property type="evidence" value="ECO:0000318"/>
    <property type="project" value="GO_Central"/>
</dbReference>
<dbReference type="GO" id="GO:0005737">
    <property type="term" value="C:cytoplasm"/>
    <property type="evidence" value="ECO:0007669"/>
    <property type="project" value="UniProtKB-SubCell"/>
</dbReference>
<dbReference type="GO" id="GO:0010387">
    <property type="term" value="P:COP9 signalosome assembly"/>
    <property type="evidence" value="ECO:0007669"/>
    <property type="project" value="InterPro"/>
</dbReference>
<dbReference type="GO" id="GO:0000338">
    <property type="term" value="P:protein deneddylation"/>
    <property type="evidence" value="ECO:0007669"/>
    <property type="project" value="InterPro"/>
</dbReference>
<dbReference type="FunFam" id="1.25.40.990:FF:000011">
    <property type="entry name" value="COP9 signalosome complex subunit 8-like Protein"/>
    <property type="match status" value="1"/>
</dbReference>
<dbReference type="Gene3D" id="1.25.40.990">
    <property type="match status" value="1"/>
</dbReference>
<dbReference type="InterPro" id="IPR033205">
    <property type="entry name" value="COP9_CSN8"/>
</dbReference>
<dbReference type="InterPro" id="IPR033464">
    <property type="entry name" value="CSN8_PSD8_EIF3K"/>
</dbReference>
<dbReference type="InterPro" id="IPR000717">
    <property type="entry name" value="PCI_dom"/>
</dbReference>
<dbReference type="PANTHER" id="PTHR13339">
    <property type="entry name" value="COP9 SIGNALOSOME COMPLEX SUBUNIT 8"/>
    <property type="match status" value="1"/>
</dbReference>
<dbReference type="PANTHER" id="PTHR13339:SF0">
    <property type="entry name" value="COP9 SIGNALOSOME COMPLEX SUBUNIT 8"/>
    <property type="match status" value="1"/>
</dbReference>
<dbReference type="Pfam" id="PF10075">
    <property type="entry name" value="CSN8_PSD8_EIF3K"/>
    <property type="match status" value="1"/>
</dbReference>
<dbReference type="PROSITE" id="PS50250">
    <property type="entry name" value="PCI"/>
    <property type="match status" value="1"/>
</dbReference>
<comment type="function">
    <text evidence="1">Component of the COP9 signalosome complex (CSN), a complex involved in various cellular and developmental processes. The CSN complex is an essential regulator of the ubiquitin (Ubl) conjugation pathway by mediating the deneddylation of the cullin subunits of E3 ligase complexes, leading to modify the Ubl ligase activity (By similarity).</text>
</comment>
<comment type="subunit">
    <text evidence="2">Component of the CSN complex, probably composed of cops1, cops2, cops3, cops4, cops5, cops6, cops7, cops8 and cops9.</text>
</comment>
<comment type="subcellular location">
    <subcellularLocation>
        <location evidence="1">Cytoplasm</location>
    </subcellularLocation>
    <subcellularLocation>
        <location evidence="1">Nucleus</location>
    </subcellularLocation>
</comment>
<comment type="similarity">
    <text evidence="4">Belongs to the CSN8 family.</text>
</comment>
<keyword id="KW-0963">Cytoplasm</keyword>
<keyword id="KW-0539">Nucleus</keyword>
<keyword id="KW-1185">Reference proteome</keyword>
<keyword id="KW-0736">Signalosome</keyword>
<protein>
    <recommendedName>
        <fullName>COP9 signalosome complex subunit 8</fullName>
        <shortName>Signalosome subunit 8</shortName>
    </recommendedName>
</protein>
<accession>Q7ZUZ0</accession>
<name>CSN8_DANRE</name>